<feature type="chain" id="PRO_1000140599" description="Small ribosomal subunit protein uS8">
    <location>
        <begin position="1"/>
        <end position="131"/>
    </location>
</feature>
<evidence type="ECO:0000255" key="1">
    <source>
        <dbReference type="HAMAP-Rule" id="MF_01302"/>
    </source>
</evidence>
<evidence type="ECO:0000305" key="2"/>
<gene>
    <name evidence="1" type="primary">rpsH</name>
    <name type="ordered locus">Rpic_3283</name>
</gene>
<accession>B2UEK5</accession>
<reference key="1">
    <citation type="submission" date="2008-05" db="EMBL/GenBank/DDBJ databases">
        <title>Complete sequence of chromosome 1 of Ralstonia pickettii 12J.</title>
        <authorList>
            <person name="Lucas S."/>
            <person name="Copeland A."/>
            <person name="Lapidus A."/>
            <person name="Glavina del Rio T."/>
            <person name="Dalin E."/>
            <person name="Tice H."/>
            <person name="Bruce D."/>
            <person name="Goodwin L."/>
            <person name="Pitluck S."/>
            <person name="Meincke L."/>
            <person name="Brettin T."/>
            <person name="Detter J.C."/>
            <person name="Han C."/>
            <person name="Kuske C.R."/>
            <person name="Schmutz J."/>
            <person name="Larimer F."/>
            <person name="Land M."/>
            <person name="Hauser L."/>
            <person name="Kyrpides N."/>
            <person name="Mikhailova N."/>
            <person name="Marsh T."/>
            <person name="Richardson P."/>
        </authorList>
    </citation>
    <scope>NUCLEOTIDE SEQUENCE [LARGE SCALE GENOMIC DNA]</scope>
    <source>
        <strain>12J</strain>
    </source>
</reference>
<keyword id="KW-0687">Ribonucleoprotein</keyword>
<keyword id="KW-0689">Ribosomal protein</keyword>
<keyword id="KW-0694">RNA-binding</keyword>
<keyword id="KW-0699">rRNA-binding</keyword>
<dbReference type="EMBL" id="CP001068">
    <property type="protein sequence ID" value="ACD28405.1"/>
    <property type="molecule type" value="Genomic_DNA"/>
</dbReference>
<dbReference type="SMR" id="B2UEK5"/>
<dbReference type="STRING" id="402626.Rpic_3283"/>
<dbReference type="KEGG" id="rpi:Rpic_3283"/>
<dbReference type="eggNOG" id="COG0096">
    <property type="taxonomic scope" value="Bacteria"/>
</dbReference>
<dbReference type="HOGENOM" id="CLU_098428_0_0_4"/>
<dbReference type="GO" id="GO:1990904">
    <property type="term" value="C:ribonucleoprotein complex"/>
    <property type="evidence" value="ECO:0007669"/>
    <property type="project" value="UniProtKB-KW"/>
</dbReference>
<dbReference type="GO" id="GO:0005840">
    <property type="term" value="C:ribosome"/>
    <property type="evidence" value="ECO:0007669"/>
    <property type="project" value="UniProtKB-KW"/>
</dbReference>
<dbReference type="GO" id="GO:0019843">
    <property type="term" value="F:rRNA binding"/>
    <property type="evidence" value="ECO:0007669"/>
    <property type="project" value="UniProtKB-UniRule"/>
</dbReference>
<dbReference type="GO" id="GO:0003735">
    <property type="term" value="F:structural constituent of ribosome"/>
    <property type="evidence" value="ECO:0007669"/>
    <property type="project" value="InterPro"/>
</dbReference>
<dbReference type="GO" id="GO:0006412">
    <property type="term" value="P:translation"/>
    <property type="evidence" value="ECO:0007669"/>
    <property type="project" value="UniProtKB-UniRule"/>
</dbReference>
<dbReference type="FunFam" id="3.30.1370.30:FF:000002">
    <property type="entry name" value="30S ribosomal protein S8"/>
    <property type="match status" value="1"/>
</dbReference>
<dbReference type="FunFam" id="3.30.1490.10:FF:000001">
    <property type="entry name" value="30S ribosomal protein S8"/>
    <property type="match status" value="1"/>
</dbReference>
<dbReference type="Gene3D" id="3.30.1370.30">
    <property type="match status" value="1"/>
</dbReference>
<dbReference type="Gene3D" id="3.30.1490.10">
    <property type="match status" value="1"/>
</dbReference>
<dbReference type="HAMAP" id="MF_01302_B">
    <property type="entry name" value="Ribosomal_uS8_B"/>
    <property type="match status" value="1"/>
</dbReference>
<dbReference type="InterPro" id="IPR000630">
    <property type="entry name" value="Ribosomal_uS8"/>
</dbReference>
<dbReference type="InterPro" id="IPR047863">
    <property type="entry name" value="Ribosomal_uS8_CS"/>
</dbReference>
<dbReference type="InterPro" id="IPR035987">
    <property type="entry name" value="Ribosomal_uS8_sf"/>
</dbReference>
<dbReference type="NCBIfam" id="NF001109">
    <property type="entry name" value="PRK00136.1"/>
    <property type="match status" value="1"/>
</dbReference>
<dbReference type="PANTHER" id="PTHR11758">
    <property type="entry name" value="40S RIBOSOMAL PROTEIN S15A"/>
    <property type="match status" value="1"/>
</dbReference>
<dbReference type="Pfam" id="PF00410">
    <property type="entry name" value="Ribosomal_S8"/>
    <property type="match status" value="1"/>
</dbReference>
<dbReference type="SUPFAM" id="SSF56047">
    <property type="entry name" value="Ribosomal protein S8"/>
    <property type="match status" value="1"/>
</dbReference>
<dbReference type="PROSITE" id="PS00053">
    <property type="entry name" value="RIBOSOMAL_S8"/>
    <property type="match status" value="1"/>
</dbReference>
<name>RS8_RALPJ</name>
<protein>
    <recommendedName>
        <fullName evidence="1">Small ribosomal subunit protein uS8</fullName>
    </recommendedName>
    <alternativeName>
        <fullName evidence="2">30S ribosomal protein S8</fullName>
    </alternativeName>
</protein>
<sequence length="131" mass="14170">MSMSDPIADMLTRIRNAQAVEKASVVMPSSKLKVAIAKVLKDEGYIDEFAVTEQGGKSTLTIGLKYYAGRPVIERLERVSKPGLRVYKGRNEIPQVMNGLGVAIISTPQGLMTDRRARATGVGGEVICYVA</sequence>
<proteinExistence type="inferred from homology"/>
<organism>
    <name type="scientific">Ralstonia pickettii (strain 12J)</name>
    <dbReference type="NCBI Taxonomy" id="402626"/>
    <lineage>
        <taxon>Bacteria</taxon>
        <taxon>Pseudomonadati</taxon>
        <taxon>Pseudomonadota</taxon>
        <taxon>Betaproteobacteria</taxon>
        <taxon>Burkholderiales</taxon>
        <taxon>Burkholderiaceae</taxon>
        <taxon>Ralstonia</taxon>
    </lineage>
</organism>
<comment type="function">
    <text evidence="1">One of the primary rRNA binding proteins, it binds directly to 16S rRNA central domain where it helps coordinate assembly of the platform of the 30S subunit.</text>
</comment>
<comment type="subunit">
    <text evidence="1">Part of the 30S ribosomal subunit. Contacts proteins S5 and S12.</text>
</comment>
<comment type="similarity">
    <text evidence="1">Belongs to the universal ribosomal protein uS8 family.</text>
</comment>